<dbReference type="EMBL" id="CP000232">
    <property type="protein sequence ID" value="ABC18610.1"/>
    <property type="molecule type" value="Genomic_DNA"/>
</dbReference>
<dbReference type="RefSeq" id="YP_429153.1">
    <property type="nucleotide sequence ID" value="NC_007644.1"/>
</dbReference>
<dbReference type="SMR" id="Q2RLS9"/>
<dbReference type="STRING" id="264732.Moth_0275"/>
<dbReference type="EnsemblBacteria" id="ABC18610">
    <property type="protein sequence ID" value="ABC18610"/>
    <property type="gene ID" value="Moth_0275"/>
</dbReference>
<dbReference type="KEGG" id="mta:Moth_0275"/>
<dbReference type="PATRIC" id="fig|264732.11.peg.292"/>
<dbReference type="eggNOG" id="COG0691">
    <property type="taxonomic scope" value="Bacteria"/>
</dbReference>
<dbReference type="HOGENOM" id="CLU_108953_0_1_9"/>
<dbReference type="OrthoDB" id="9805462at2"/>
<dbReference type="GO" id="GO:0005829">
    <property type="term" value="C:cytosol"/>
    <property type="evidence" value="ECO:0007669"/>
    <property type="project" value="TreeGrafter"/>
</dbReference>
<dbReference type="GO" id="GO:0003723">
    <property type="term" value="F:RNA binding"/>
    <property type="evidence" value="ECO:0007669"/>
    <property type="project" value="UniProtKB-UniRule"/>
</dbReference>
<dbReference type="GO" id="GO:0070929">
    <property type="term" value="P:trans-translation"/>
    <property type="evidence" value="ECO:0007669"/>
    <property type="project" value="UniProtKB-UniRule"/>
</dbReference>
<dbReference type="CDD" id="cd09294">
    <property type="entry name" value="SmpB"/>
    <property type="match status" value="1"/>
</dbReference>
<dbReference type="Gene3D" id="2.40.280.10">
    <property type="match status" value="1"/>
</dbReference>
<dbReference type="HAMAP" id="MF_00023">
    <property type="entry name" value="SmpB"/>
    <property type="match status" value="1"/>
</dbReference>
<dbReference type="InterPro" id="IPR023620">
    <property type="entry name" value="SmpB"/>
</dbReference>
<dbReference type="InterPro" id="IPR000037">
    <property type="entry name" value="SsrA-bd_prot"/>
</dbReference>
<dbReference type="InterPro" id="IPR020081">
    <property type="entry name" value="SsrA-bd_prot_CS"/>
</dbReference>
<dbReference type="NCBIfam" id="NF003843">
    <property type="entry name" value="PRK05422.1"/>
    <property type="match status" value="1"/>
</dbReference>
<dbReference type="NCBIfam" id="TIGR00086">
    <property type="entry name" value="smpB"/>
    <property type="match status" value="1"/>
</dbReference>
<dbReference type="PANTHER" id="PTHR30308:SF2">
    <property type="entry name" value="SSRA-BINDING PROTEIN"/>
    <property type="match status" value="1"/>
</dbReference>
<dbReference type="PANTHER" id="PTHR30308">
    <property type="entry name" value="TMRNA-BINDING COMPONENT OF TRANS-TRANSLATION TAGGING COMPLEX"/>
    <property type="match status" value="1"/>
</dbReference>
<dbReference type="Pfam" id="PF01668">
    <property type="entry name" value="SmpB"/>
    <property type="match status" value="1"/>
</dbReference>
<dbReference type="SUPFAM" id="SSF74982">
    <property type="entry name" value="Small protein B (SmpB)"/>
    <property type="match status" value="1"/>
</dbReference>
<dbReference type="PROSITE" id="PS01317">
    <property type="entry name" value="SSRP"/>
    <property type="match status" value="1"/>
</dbReference>
<gene>
    <name evidence="1" type="primary">smpB</name>
    <name type="ordered locus">Moth_0275</name>
</gene>
<proteinExistence type="inferred from homology"/>
<organism>
    <name type="scientific">Moorella thermoacetica (strain ATCC 39073 / JCM 9320)</name>
    <dbReference type="NCBI Taxonomy" id="264732"/>
    <lineage>
        <taxon>Bacteria</taxon>
        <taxon>Bacillati</taxon>
        <taxon>Bacillota</taxon>
        <taxon>Clostridia</taxon>
        <taxon>Moorellales</taxon>
        <taxon>Moorellaceae</taxon>
        <taxon>Moorella</taxon>
    </lineage>
</organism>
<comment type="function">
    <text evidence="1">Required for rescue of stalled ribosomes mediated by trans-translation. Binds to transfer-messenger RNA (tmRNA), required for stable association of tmRNA with ribosomes. tmRNA and SmpB together mimic tRNA shape, replacing the anticodon stem-loop with SmpB. tmRNA is encoded by the ssrA gene; the 2 termini fold to resemble tRNA(Ala) and it encodes a 'tag peptide', a short internal open reading frame. During trans-translation Ala-aminoacylated tmRNA acts like a tRNA, entering the A-site of stalled ribosomes, displacing the stalled mRNA. The ribosome then switches to translate the ORF on the tmRNA; the nascent peptide is terminated with the 'tag peptide' encoded by the tmRNA and targeted for degradation. The ribosome is freed to recommence translation, which seems to be the essential function of trans-translation.</text>
</comment>
<comment type="subcellular location">
    <subcellularLocation>
        <location evidence="1">Cytoplasm</location>
    </subcellularLocation>
    <text evidence="1">The tmRNA-SmpB complex associates with stalled 70S ribosomes.</text>
</comment>
<comment type="similarity">
    <text evidence="1">Belongs to the SmpB family.</text>
</comment>
<keyword id="KW-0963">Cytoplasm</keyword>
<keyword id="KW-0694">RNA-binding</keyword>
<reference key="1">
    <citation type="journal article" date="2008" name="Environ. Microbiol.">
        <title>The complete genome sequence of Moorella thermoacetica (f. Clostridium thermoaceticum).</title>
        <authorList>
            <person name="Pierce E."/>
            <person name="Xie G."/>
            <person name="Barabote R.D."/>
            <person name="Saunders E."/>
            <person name="Han C.S."/>
            <person name="Detter J.C."/>
            <person name="Richardson P."/>
            <person name="Brettin T.S."/>
            <person name="Das A."/>
            <person name="Ljungdahl L.G."/>
            <person name="Ragsdale S.W."/>
        </authorList>
    </citation>
    <scope>NUCLEOTIDE SEQUENCE [LARGE SCALE GENOMIC DNA]</scope>
    <source>
        <strain>ATCC 39073 / JCM 9320</strain>
    </source>
</reference>
<name>SSRP_MOOTA</name>
<sequence>MGRQVKVVTDNRRARHDYFIEETYEAGIALTGTEVKSLRNGRANIKDSYARVENGELILHDMHISPYEQGNRFNHEPRRPRRLLMHRYEIQRLYGKVREKGLTLIPLKVYFNERGLAKVELALVKGKRLYDKREDIAARDAQREIARALRERQKV</sequence>
<accession>Q2RLS9</accession>
<protein>
    <recommendedName>
        <fullName evidence="1">SsrA-binding protein</fullName>
    </recommendedName>
    <alternativeName>
        <fullName evidence="1">Small protein B</fullName>
    </alternativeName>
</protein>
<evidence type="ECO:0000255" key="1">
    <source>
        <dbReference type="HAMAP-Rule" id="MF_00023"/>
    </source>
</evidence>
<feature type="chain" id="PRO_0000331064" description="SsrA-binding protein">
    <location>
        <begin position="1"/>
        <end position="155"/>
    </location>
</feature>